<dbReference type="EMBL" id="AE009948">
    <property type="protein sequence ID" value="AAM99878.1"/>
    <property type="molecule type" value="Genomic_DNA"/>
</dbReference>
<dbReference type="RefSeq" id="NP_688006.1">
    <property type="nucleotide sequence ID" value="NC_004116.1"/>
</dbReference>
<dbReference type="RefSeq" id="WP_000625903.1">
    <property type="nucleotide sequence ID" value="NC_004116.1"/>
</dbReference>
<dbReference type="SMR" id="Q8DZV1"/>
<dbReference type="STRING" id="208435.SAG0995"/>
<dbReference type="KEGG" id="sag:SAG0995"/>
<dbReference type="PATRIC" id="fig|208435.3.peg.1002"/>
<dbReference type="HOGENOM" id="CLU_166693_1_0_9"/>
<dbReference type="OrthoDB" id="1649074at2"/>
<dbReference type="Proteomes" id="UP000000821">
    <property type="component" value="Chromosome"/>
</dbReference>
<dbReference type="Gene3D" id="1.10.220.80">
    <property type="entry name" value="BH2638-like"/>
    <property type="match status" value="1"/>
</dbReference>
<dbReference type="HAMAP" id="MF_01041">
    <property type="entry name" value="UPF0223"/>
    <property type="match status" value="1"/>
</dbReference>
<dbReference type="InterPro" id="IPR023324">
    <property type="entry name" value="BH2638-like_sf"/>
</dbReference>
<dbReference type="InterPro" id="IPR007920">
    <property type="entry name" value="UPF0223"/>
</dbReference>
<dbReference type="NCBIfam" id="NF003353">
    <property type="entry name" value="PRK04387.1"/>
    <property type="match status" value="1"/>
</dbReference>
<dbReference type="Pfam" id="PF05256">
    <property type="entry name" value="UPF0223"/>
    <property type="match status" value="1"/>
</dbReference>
<dbReference type="PIRSF" id="PIRSF037260">
    <property type="entry name" value="UPF0223"/>
    <property type="match status" value="1"/>
</dbReference>
<dbReference type="SUPFAM" id="SSF158504">
    <property type="entry name" value="BH2638-like"/>
    <property type="match status" value="1"/>
</dbReference>
<sequence>MISSNYSYPLDPSWNTEDITKVLRFLNQVEHAYENSIKVDDLLDSYKEFKKVVKSKAQEKQIDREFQRTSGYSTYQAVKAAQQQAKGFISLGR</sequence>
<name>Y995_STRA5</name>
<proteinExistence type="inferred from homology"/>
<accession>Q8DZV1</accession>
<feature type="chain" id="PRO_0000216694" description="UPF0223 protein SAG0995">
    <location>
        <begin position="1"/>
        <end position="93"/>
    </location>
</feature>
<evidence type="ECO:0000255" key="1">
    <source>
        <dbReference type="HAMAP-Rule" id="MF_01041"/>
    </source>
</evidence>
<organism>
    <name type="scientific">Streptococcus agalactiae serotype V (strain ATCC BAA-611 / 2603 V/R)</name>
    <dbReference type="NCBI Taxonomy" id="208435"/>
    <lineage>
        <taxon>Bacteria</taxon>
        <taxon>Bacillati</taxon>
        <taxon>Bacillota</taxon>
        <taxon>Bacilli</taxon>
        <taxon>Lactobacillales</taxon>
        <taxon>Streptococcaceae</taxon>
        <taxon>Streptococcus</taxon>
    </lineage>
</organism>
<keyword id="KW-1185">Reference proteome</keyword>
<reference key="1">
    <citation type="journal article" date="2002" name="Proc. Natl. Acad. Sci. U.S.A.">
        <title>Complete genome sequence and comparative genomic analysis of an emerging human pathogen, serotype V Streptococcus agalactiae.</title>
        <authorList>
            <person name="Tettelin H."/>
            <person name="Masignani V."/>
            <person name="Cieslewicz M.J."/>
            <person name="Eisen J.A."/>
            <person name="Peterson S.N."/>
            <person name="Wessels M.R."/>
            <person name="Paulsen I.T."/>
            <person name="Nelson K.E."/>
            <person name="Margarit I."/>
            <person name="Read T.D."/>
            <person name="Madoff L.C."/>
            <person name="Wolf A.M."/>
            <person name="Beanan M.J."/>
            <person name="Brinkac L.M."/>
            <person name="Daugherty S.C."/>
            <person name="DeBoy R.T."/>
            <person name="Durkin A.S."/>
            <person name="Kolonay J.F."/>
            <person name="Madupu R."/>
            <person name="Lewis M.R."/>
            <person name="Radune D."/>
            <person name="Fedorova N.B."/>
            <person name="Scanlan D."/>
            <person name="Khouri H.M."/>
            <person name="Mulligan S."/>
            <person name="Carty H.A."/>
            <person name="Cline R.T."/>
            <person name="Van Aken S.E."/>
            <person name="Gill J."/>
            <person name="Scarselli M."/>
            <person name="Mora M."/>
            <person name="Iacobini E.T."/>
            <person name="Brettoni C."/>
            <person name="Galli G."/>
            <person name="Mariani M."/>
            <person name="Vegni F."/>
            <person name="Maione D."/>
            <person name="Rinaudo D."/>
            <person name="Rappuoli R."/>
            <person name="Telford J.L."/>
            <person name="Kasper D.L."/>
            <person name="Grandi G."/>
            <person name="Fraser C.M."/>
        </authorList>
    </citation>
    <scope>NUCLEOTIDE SEQUENCE [LARGE SCALE GENOMIC DNA]</scope>
    <source>
        <strain>ATCC BAA-611 / 2603 V/R</strain>
    </source>
</reference>
<comment type="similarity">
    <text evidence="1">Belongs to the UPF0223 family.</text>
</comment>
<gene>
    <name type="ordered locus">SAG0995</name>
</gene>
<protein>
    <recommendedName>
        <fullName evidence="1">UPF0223 protein SAG0995</fullName>
    </recommendedName>
</protein>